<gene>
    <name type="ordered locus">At5g67130</name>
    <name type="ORF">K21H1.9</name>
</gene>
<feature type="signal peptide" evidence="1">
    <location>
        <begin position="1"/>
        <end position="28"/>
    </location>
</feature>
<feature type="chain" id="PRO_0000252121" description="PI-PLC X domain-containing protein At5g67130">
    <location>
        <begin position="29"/>
        <end position="404"/>
    </location>
</feature>
<feature type="propeptide" id="PRO_0000252122" description="Removed in mature form" evidence="1">
    <location>
        <begin position="405"/>
        <end position="426"/>
    </location>
</feature>
<feature type="domain" description="PI-PLC X-box" evidence="2">
    <location>
        <begin position="76"/>
        <end position="232"/>
    </location>
</feature>
<feature type="region of interest" description="Disordered" evidence="3">
    <location>
        <begin position="258"/>
        <end position="277"/>
    </location>
</feature>
<feature type="lipid moiety-binding region" description="GPI-anchor amidated serine" evidence="1">
    <location>
        <position position="404"/>
    </location>
</feature>
<feature type="glycosylation site" description="N-linked (GlcNAc...) asparagine" evidence="1">
    <location>
        <position position="151"/>
    </location>
</feature>
<feature type="glycosylation site" description="N-linked (GlcNAc...) asparagine" evidence="1">
    <location>
        <position position="255"/>
    </location>
</feature>
<feature type="glycosylation site" description="N-linked (GlcNAc...) asparagine" evidence="1">
    <location>
        <position position="370"/>
    </location>
</feature>
<keyword id="KW-1003">Cell membrane</keyword>
<keyword id="KW-0325">Glycoprotein</keyword>
<keyword id="KW-0336">GPI-anchor</keyword>
<keyword id="KW-0449">Lipoprotein</keyword>
<keyword id="KW-0472">Membrane</keyword>
<keyword id="KW-1185">Reference proteome</keyword>
<keyword id="KW-0732">Signal</keyword>
<organism>
    <name type="scientific">Arabidopsis thaliana</name>
    <name type="common">Mouse-ear cress</name>
    <dbReference type="NCBI Taxonomy" id="3702"/>
    <lineage>
        <taxon>Eukaryota</taxon>
        <taxon>Viridiplantae</taxon>
        <taxon>Streptophyta</taxon>
        <taxon>Embryophyta</taxon>
        <taxon>Tracheophyta</taxon>
        <taxon>Spermatophyta</taxon>
        <taxon>Magnoliopsida</taxon>
        <taxon>eudicotyledons</taxon>
        <taxon>Gunneridae</taxon>
        <taxon>Pentapetalae</taxon>
        <taxon>rosids</taxon>
        <taxon>malvids</taxon>
        <taxon>Brassicales</taxon>
        <taxon>Brassicaceae</taxon>
        <taxon>Camelineae</taxon>
        <taxon>Arabidopsis</taxon>
    </lineage>
</organism>
<dbReference type="EMBL" id="AB020742">
    <property type="protein sequence ID" value="BAB10947.1"/>
    <property type="status" value="ALT_SEQ"/>
    <property type="molecule type" value="Genomic_DNA"/>
</dbReference>
<dbReference type="EMBL" id="CP002688">
    <property type="protein sequence ID" value="AED98305.1"/>
    <property type="molecule type" value="Genomic_DNA"/>
</dbReference>
<dbReference type="EMBL" id="AY054674">
    <property type="protein sequence ID" value="AAK96865.1"/>
    <property type="molecule type" value="mRNA"/>
</dbReference>
<dbReference type="EMBL" id="AY081553">
    <property type="protein sequence ID" value="AAM10115.1"/>
    <property type="molecule type" value="mRNA"/>
</dbReference>
<dbReference type="EMBL" id="AY087841">
    <property type="protein sequence ID" value="AAM65394.1"/>
    <property type="molecule type" value="mRNA"/>
</dbReference>
<dbReference type="RefSeq" id="NP_569045.1">
    <property type="nucleotide sequence ID" value="NM_126113.4"/>
</dbReference>
<dbReference type="BioGRID" id="22090">
    <property type="interactions" value="11"/>
</dbReference>
<dbReference type="FunCoup" id="Q93XX5">
    <property type="interactions" value="671"/>
</dbReference>
<dbReference type="IntAct" id="Q93XX5">
    <property type="interactions" value="11"/>
</dbReference>
<dbReference type="STRING" id="3702.Q93XX5"/>
<dbReference type="GlyGen" id="Q93XX5">
    <property type="glycosylation" value="4 sites"/>
</dbReference>
<dbReference type="iPTMnet" id="Q93XX5"/>
<dbReference type="PaxDb" id="3702-AT5G67130.1"/>
<dbReference type="ProteomicsDB" id="243024"/>
<dbReference type="EnsemblPlants" id="AT5G67130.1">
    <property type="protein sequence ID" value="AT5G67130.1"/>
    <property type="gene ID" value="AT5G67130"/>
</dbReference>
<dbReference type="GeneID" id="836848"/>
<dbReference type="Gramene" id="AT5G67130.1">
    <property type="protein sequence ID" value="AT5G67130.1"/>
    <property type="gene ID" value="AT5G67130"/>
</dbReference>
<dbReference type="KEGG" id="ath:AT5G67130"/>
<dbReference type="Araport" id="AT5G67130"/>
<dbReference type="TAIR" id="AT5G67130"/>
<dbReference type="eggNOG" id="ENOG502QR4B">
    <property type="taxonomic scope" value="Eukaryota"/>
</dbReference>
<dbReference type="HOGENOM" id="CLU_036028_0_0_1"/>
<dbReference type="InParanoid" id="Q93XX5"/>
<dbReference type="OMA" id="NTVSACQ"/>
<dbReference type="OrthoDB" id="7984201at2759"/>
<dbReference type="PhylomeDB" id="Q93XX5"/>
<dbReference type="PRO" id="PR:Q93XX5"/>
<dbReference type="Proteomes" id="UP000006548">
    <property type="component" value="Chromosome 5"/>
</dbReference>
<dbReference type="ExpressionAtlas" id="Q93XX5">
    <property type="expression patterns" value="baseline and differential"/>
</dbReference>
<dbReference type="GO" id="GO:0005886">
    <property type="term" value="C:plasma membrane"/>
    <property type="evidence" value="ECO:0007669"/>
    <property type="project" value="UniProtKB-SubCell"/>
</dbReference>
<dbReference type="GO" id="GO:0009536">
    <property type="term" value="C:plastid"/>
    <property type="evidence" value="ECO:0007005"/>
    <property type="project" value="TAIR"/>
</dbReference>
<dbReference type="GO" id="GO:0098552">
    <property type="term" value="C:side of membrane"/>
    <property type="evidence" value="ECO:0007669"/>
    <property type="project" value="UniProtKB-KW"/>
</dbReference>
<dbReference type="GO" id="GO:0008081">
    <property type="term" value="F:phosphoric diester hydrolase activity"/>
    <property type="evidence" value="ECO:0007669"/>
    <property type="project" value="InterPro"/>
</dbReference>
<dbReference type="GO" id="GO:0006629">
    <property type="term" value="P:lipid metabolic process"/>
    <property type="evidence" value="ECO:0007669"/>
    <property type="project" value="InterPro"/>
</dbReference>
<dbReference type="CDD" id="cd08588">
    <property type="entry name" value="PI-PLCc_At5g67130_like"/>
    <property type="match status" value="1"/>
</dbReference>
<dbReference type="FunFam" id="3.20.20.190:FF:000048">
    <property type="entry name" value="PI-PLC X domain-containing protein"/>
    <property type="match status" value="1"/>
</dbReference>
<dbReference type="Gene3D" id="3.20.20.190">
    <property type="entry name" value="Phosphatidylinositol (PI) phosphodiesterase"/>
    <property type="match status" value="1"/>
</dbReference>
<dbReference type="InterPro" id="IPR051057">
    <property type="entry name" value="PI-PLC_domain"/>
</dbReference>
<dbReference type="InterPro" id="IPR017946">
    <property type="entry name" value="PLC-like_Pdiesterase_TIM-brl"/>
</dbReference>
<dbReference type="PANTHER" id="PTHR13593">
    <property type="match status" value="1"/>
</dbReference>
<dbReference type="PANTHER" id="PTHR13593:SF140">
    <property type="entry name" value="PLC-LIKE PHOSPHODIESTERASE"/>
    <property type="match status" value="1"/>
</dbReference>
<dbReference type="SUPFAM" id="SSF51695">
    <property type="entry name" value="PLC-like phosphodiesterases"/>
    <property type="match status" value="1"/>
</dbReference>
<dbReference type="PROSITE" id="PS50007">
    <property type="entry name" value="PIPLC_X_DOMAIN"/>
    <property type="match status" value="1"/>
</dbReference>
<name>Y5713_ARATH</name>
<protein>
    <recommendedName>
        <fullName>PI-PLC X domain-containing protein At5g67130</fullName>
    </recommendedName>
</protein>
<accession>Q93XX5</accession>
<accession>Q8LAF6</accession>
<accession>Q9FHA0</accession>
<reference key="1">
    <citation type="journal article" date="2000" name="DNA Res.">
        <title>Structural analysis of Arabidopsis thaliana chromosome 5. X. Sequence features of the regions of 3,076,755 bp covered by sixty P1 and TAC clones.</title>
        <authorList>
            <person name="Sato S."/>
            <person name="Nakamura Y."/>
            <person name="Kaneko T."/>
            <person name="Katoh T."/>
            <person name="Asamizu E."/>
            <person name="Kotani H."/>
            <person name="Tabata S."/>
        </authorList>
    </citation>
    <scope>NUCLEOTIDE SEQUENCE [LARGE SCALE GENOMIC DNA]</scope>
    <source>
        <strain>cv. Columbia</strain>
    </source>
</reference>
<reference key="2">
    <citation type="journal article" date="2017" name="Plant J.">
        <title>Araport11: a complete reannotation of the Arabidopsis thaliana reference genome.</title>
        <authorList>
            <person name="Cheng C.Y."/>
            <person name="Krishnakumar V."/>
            <person name="Chan A.P."/>
            <person name="Thibaud-Nissen F."/>
            <person name="Schobel S."/>
            <person name="Town C.D."/>
        </authorList>
    </citation>
    <scope>GENOME REANNOTATION</scope>
    <source>
        <strain>cv. Columbia</strain>
    </source>
</reference>
<reference key="3">
    <citation type="journal article" date="2003" name="Science">
        <title>Empirical analysis of transcriptional activity in the Arabidopsis genome.</title>
        <authorList>
            <person name="Yamada K."/>
            <person name="Lim J."/>
            <person name="Dale J.M."/>
            <person name="Chen H."/>
            <person name="Shinn P."/>
            <person name="Palm C.J."/>
            <person name="Southwick A.M."/>
            <person name="Wu H.C."/>
            <person name="Kim C.J."/>
            <person name="Nguyen M."/>
            <person name="Pham P.K."/>
            <person name="Cheuk R.F."/>
            <person name="Karlin-Newmann G."/>
            <person name="Liu S.X."/>
            <person name="Lam B."/>
            <person name="Sakano H."/>
            <person name="Wu T."/>
            <person name="Yu G."/>
            <person name="Miranda M."/>
            <person name="Quach H.L."/>
            <person name="Tripp M."/>
            <person name="Chang C.H."/>
            <person name="Lee J.M."/>
            <person name="Toriumi M.J."/>
            <person name="Chan M.M."/>
            <person name="Tang C.C."/>
            <person name="Onodera C.S."/>
            <person name="Deng J.M."/>
            <person name="Akiyama K."/>
            <person name="Ansari Y."/>
            <person name="Arakawa T."/>
            <person name="Banh J."/>
            <person name="Banno F."/>
            <person name="Bowser L."/>
            <person name="Brooks S.Y."/>
            <person name="Carninci P."/>
            <person name="Chao Q."/>
            <person name="Choy N."/>
            <person name="Enju A."/>
            <person name="Goldsmith A.D."/>
            <person name="Gurjal M."/>
            <person name="Hansen N.F."/>
            <person name="Hayashizaki Y."/>
            <person name="Johnson-Hopson C."/>
            <person name="Hsuan V.W."/>
            <person name="Iida K."/>
            <person name="Karnes M."/>
            <person name="Khan S."/>
            <person name="Koesema E."/>
            <person name="Ishida J."/>
            <person name="Jiang P.X."/>
            <person name="Jones T."/>
            <person name="Kawai J."/>
            <person name="Kamiya A."/>
            <person name="Meyers C."/>
            <person name="Nakajima M."/>
            <person name="Narusaka M."/>
            <person name="Seki M."/>
            <person name="Sakurai T."/>
            <person name="Satou M."/>
            <person name="Tamse R."/>
            <person name="Vaysberg M."/>
            <person name="Wallender E.K."/>
            <person name="Wong C."/>
            <person name="Yamamura Y."/>
            <person name="Yuan S."/>
            <person name="Shinozaki K."/>
            <person name="Davis R.W."/>
            <person name="Theologis A."/>
            <person name="Ecker J.R."/>
        </authorList>
    </citation>
    <scope>NUCLEOTIDE SEQUENCE [LARGE SCALE MRNA]</scope>
    <source>
        <strain>cv. Columbia</strain>
    </source>
</reference>
<reference key="4">
    <citation type="submission" date="2002-03" db="EMBL/GenBank/DDBJ databases">
        <title>Full-length cDNA from Arabidopsis thaliana.</title>
        <authorList>
            <person name="Brover V.V."/>
            <person name="Troukhan M.E."/>
            <person name="Alexandrov N.A."/>
            <person name="Lu Y.-P."/>
            <person name="Flavell R.B."/>
            <person name="Feldmann K.A."/>
        </authorList>
    </citation>
    <scope>NUCLEOTIDE SEQUENCE [LARGE SCALE MRNA]</scope>
</reference>
<reference key="5">
    <citation type="journal article" date="2006" name="J. Proteome Res.">
        <title>Modification-specific proteomics of plasma membrane proteins: identification and characterization of glycosylphosphatidylinositol-anchored proteins released upon phospholipase D treatment.</title>
        <authorList>
            <person name="Elortza F."/>
            <person name="Mohammed S."/>
            <person name="Bunkenborg J."/>
            <person name="Foster L.J."/>
            <person name="Nuehse T.S."/>
            <person name="Brodbeck U."/>
            <person name="Peck S.C."/>
            <person name="Jensen O.N."/>
        </authorList>
    </citation>
    <scope>IDENTIFICATION BY MASS SPECTROMETRY</scope>
    <scope>GPI-ANCHOR [LARGE SCALE ANALYSIS]</scope>
</reference>
<proteinExistence type="evidence at protein level"/>
<sequence length="426" mass="46607">MSACINGLCRAVTVSLLLLLLSFSFSSACSNGNCQLLDSCSSATDCVSGLYCGDCPAVGRSKPVCTRGQATSPTSIINGLPFNKYTWLMTHNAFSNANAPLLPGVERITFYNQEDTITNQLQNGVRGLMLDMYDFNNDIWLCHSLRGQCFNFTAFQPAINILREVEAFLSQNPTEIVTIIIEDYVHRPKGLSTLFANAGLDKYWFPVSKMPRKGEDWPTVTDMVQENHRLLVFTSVAAKEDEEGVAYQWRYMVENESGDPGVKRGSCPNRKESQPLNSKSSSLFLMNYFPTYPVEKDACKEHSAPLAEMVGTCLKSGGNRMPNFLAVNFYMRSDGGGVFEILDRMNGPVLCGCETLSACQPGAAYGSCKNVTVQTRTPSMDSTAGSNSGGSYSGSVQFSRSLASVAQLNNIVVFCFSLLPLLIFLL</sequence>
<comment type="subcellular location">
    <subcellularLocation>
        <location>Cell membrane</location>
        <topology>Lipid-anchor</topology>
        <topology>GPI-anchor</topology>
    </subcellularLocation>
</comment>
<comment type="sequence caution" evidence="4">
    <conflict type="erroneous gene model prediction">
        <sequence resource="EMBL-CDS" id="BAB10947"/>
    </conflict>
</comment>
<evidence type="ECO:0000255" key="1"/>
<evidence type="ECO:0000255" key="2">
    <source>
        <dbReference type="PROSITE-ProRule" id="PRU00270"/>
    </source>
</evidence>
<evidence type="ECO:0000256" key="3">
    <source>
        <dbReference type="SAM" id="MobiDB-lite"/>
    </source>
</evidence>
<evidence type="ECO:0000305" key="4"/>